<dbReference type="EMBL" id="HE580154">
    <property type="protein sequence ID" value="CCD22033.1"/>
    <property type="molecule type" value="mRNA"/>
</dbReference>
<dbReference type="SMR" id="G4V4G0"/>
<dbReference type="GO" id="GO:0005576">
    <property type="term" value="C:extracellular region"/>
    <property type="evidence" value="ECO:0007669"/>
    <property type="project" value="UniProtKB-SubCell"/>
</dbReference>
<dbReference type="GO" id="GO:0005520">
    <property type="term" value="F:insulin-like growth factor binding"/>
    <property type="evidence" value="ECO:0007669"/>
    <property type="project" value="InterPro"/>
</dbReference>
<dbReference type="GO" id="GO:0045087">
    <property type="term" value="P:innate immune response"/>
    <property type="evidence" value="ECO:0007669"/>
    <property type="project" value="UniProtKB-KW"/>
</dbReference>
<dbReference type="GO" id="GO:0001558">
    <property type="term" value="P:regulation of cell growth"/>
    <property type="evidence" value="ECO:0007669"/>
    <property type="project" value="InterPro"/>
</dbReference>
<dbReference type="GO" id="GO:0009966">
    <property type="term" value="P:regulation of signal transduction"/>
    <property type="evidence" value="ECO:0007669"/>
    <property type="project" value="TreeGrafter"/>
</dbReference>
<dbReference type="Gene3D" id="4.10.40.20">
    <property type="match status" value="1"/>
</dbReference>
<dbReference type="InterPro" id="IPR009030">
    <property type="entry name" value="Growth_fac_rcpt_cys_sf"/>
</dbReference>
<dbReference type="InterPro" id="IPR000867">
    <property type="entry name" value="IGFBP-like"/>
</dbReference>
<dbReference type="InterPro" id="IPR011390">
    <property type="entry name" value="IGFBP_rP_mac25"/>
</dbReference>
<dbReference type="PANTHER" id="PTHR14186:SF20">
    <property type="entry name" value="CYSTEINE-RICH MOTOR NEURON 1 PROTEIN-LIKE"/>
    <property type="match status" value="1"/>
</dbReference>
<dbReference type="PANTHER" id="PTHR14186">
    <property type="entry name" value="INSULIN-LIKE GROWTH FACTOR BINDING PROTEIN-RELATED"/>
    <property type="match status" value="1"/>
</dbReference>
<dbReference type="SUPFAM" id="SSF57184">
    <property type="entry name" value="Growth factor receptor domain"/>
    <property type="match status" value="1"/>
</dbReference>
<dbReference type="PROSITE" id="PS51323">
    <property type="entry name" value="IGFBP_N_2"/>
    <property type="match status" value="1"/>
</dbReference>
<name>SIBD2_CUPSA</name>
<protein>
    <recommendedName>
        <fullName>Single insulin-like growth factor-binding domain protein-2</fullName>
        <shortName>SIBD-2</shortName>
    </recommendedName>
</protein>
<evidence type="ECO:0000250" key="1"/>
<evidence type="ECO:0000255" key="2">
    <source>
        <dbReference type="PROSITE-ProRule" id="PRU00653"/>
    </source>
</evidence>
<keyword id="KW-1015">Disulfide bond</keyword>
<keyword id="KW-0325">Glycoprotein</keyword>
<keyword id="KW-0391">Immunity</keyword>
<keyword id="KW-0399">Innate immunity</keyword>
<keyword id="KW-0964">Secreted</keyword>
<keyword id="KW-0732">Signal</keyword>
<accession>G4V4G0</accession>
<feature type="signal peptide" evidence="1">
    <location>
        <begin position="1"/>
        <end position="18"/>
    </location>
</feature>
<feature type="chain" id="PRO_0000425733" description="Single insulin-like growth factor-binding domain protein-2">
    <location>
        <begin position="19"/>
        <end position="99"/>
    </location>
</feature>
<feature type="domain" description="IGFBP N-terminal" evidence="2">
    <location>
        <begin position="19"/>
        <end position="98"/>
    </location>
</feature>
<feature type="glycosylation site" description="O-linked (GalNAc...) serine">
    <location>
        <position position="20"/>
    </location>
</feature>
<feature type="disulfide bond" evidence="2">
    <location>
        <begin position="21"/>
        <end position="44"/>
    </location>
</feature>
<feature type="disulfide bond" evidence="2">
    <location>
        <begin position="24"/>
        <end position="46"/>
    </location>
</feature>
<feature type="disulfide bond" evidence="2">
    <location>
        <begin position="29"/>
        <end position="47"/>
    </location>
</feature>
<feature type="disulfide bond" evidence="2">
    <location>
        <begin position="35"/>
        <end position="50"/>
    </location>
</feature>
<feature type="disulfide bond" evidence="2">
    <location>
        <begin position="58"/>
        <end position="74"/>
    </location>
</feature>
<feature type="disulfide bond" evidence="2">
    <location>
        <begin position="68"/>
        <end position="95"/>
    </location>
</feature>
<proteinExistence type="evidence at protein level"/>
<comment type="function">
    <text evidence="1">Has a role in the innate immune system.</text>
</comment>
<comment type="subcellular location">
    <subcellularLocation>
        <location evidence="1">Secreted</location>
    </subcellularLocation>
</comment>
<comment type="tissue specificity">
    <text>Expressed in hemocytes.</text>
</comment>
<comment type="miscellaneous">
    <text evidence="1">Does not reveal bactericidal activities against E.coli and S.aureus.</text>
</comment>
<reference key="1">
    <citation type="journal article" date="2011" name="Insect Biochem. Mol. Biol.">
        <title>Purification, cDNA structure and biological significance of a single insulin-like growth factor-binding domain protein (SIBD-1) identified in the hemocytes of the spider Cupiennius salei.</title>
        <authorList>
            <person name="Kuhn-Nentwig L."/>
            <person name="Largiader C.R."/>
            <person name="Streitberger K."/>
            <person name="Chandru S."/>
            <person name="Baumann T."/>
            <person name="Kampfer U."/>
            <person name="Schaller J."/>
            <person name="Schurch S."/>
            <person name="Nentwig W."/>
        </authorList>
    </citation>
    <scope>NUCLEOTIDE SEQUENCE [MRNA]</scope>
    <source>
        <tissue>Hemocyte</tissue>
    </source>
</reference>
<organism>
    <name type="scientific">Cupiennius salei</name>
    <name type="common">American wandering spider</name>
    <dbReference type="NCBI Taxonomy" id="6928"/>
    <lineage>
        <taxon>Eukaryota</taxon>
        <taxon>Metazoa</taxon>
        <taxon>Ecdysozoa</taxon>
        <taxon>Arthropoda</taxon>
        <taxon>Chelicerata</taxon>
        <taxon>Arachnida</taxon>
        <taxon>Araneae</taxon>
        <taxon>Araneomorphae</taxon>
        <taxon>Entelegynae</taxon>
        <taxon>Lycosoidea</taxon>
        <taxon>Ctenidae</taxon>
        <taxon>Cupiennius</taxon>
    </lineage>
</organism>
<sequence length="99" mass="10488">MESLFIFAFGMMLSSASALSCIPCVPEECEDPGPCEYGKVLDPCQCCLICRKGPGEICGGPWNLQGVCAEGFACITLSGNPVMNLNGGGQEVGRCRKKY</sequence>